<name>KCY_NITEU</name>
<organism>
    <name type="scientific">Nitrosomonas europaea (strain ATCC 19718 / CIP 103999 / KCTC 2705 / NBRC 14298)</name>
    <dbReference type="NCBI Taxonomy" id="228410"/>
    <lineage>
        <taxon>Bacteria</taxon>
        <taxon>Pseudomonadati</taxon>
        <taxon>Pseudomonadota</taxon>
        <taxon>Betaproteobacteria</taxon>
        <taxon>Nitrosomonadales</taxon>
        <taxon>Nitrosomonadaceae</taxon>
        <taxon>Nitrosomonas</taxon>
    </lineage>
</organism>
<comment type="catalytic activity">
    <reaction evidence="1">
        <text>CMP + ATP = CDP + ADP</text>
        <dbReference type="Rhea" id="RHEA:11600"/>
        <dbReference type="ChEBI" id="CHEBI:30616"/>
        <dbReference type="ChEBI" id="CHEBI:58069"/>
        <dbReference type="ChEBI" id="CHEBI:60377"/>
        <dbReference type="ChEBI" id="CHEBI:456216"/>
        <dbReference type="EC" id="2.7.4.25"/>
    </reaction>
</comment>
<comment type="catalytic activity">
    <reaction evidence="1">
        <text>dCMP + ATP = dCDP + ADP</text>
        <dbReference type="Rhea" id="RHEA:25094"/>
        <dbReference type="ChEBI" id="CHEBI:30616"/>
        <dbReference type="ChEBI" id="CHEBI:57566"/>
        <dbReference type="ChEBI" id="CHEBI:58593"/>
        <dbReference type="ChEBI" id="CHEBI:456216"/>
        <dbReference type="EC" id="2.7.4.25"/>
    </reaction>
</comment>
<comment type="subcellular location">
    <subcellularLocation>
        <location evidence="1">Cytoplasm</location>
    </subcellularLocation>
</comment>
<comment type="similarity">
    <text evidence="1">Belongs to the cytidylate kinase family. Type 1 subfamily.</text>
</comment>
<evidence type="ECO:0000255" key="1">
    <source>
        <dbReference type="HAMAP-Rule" id="MF_00238"/>
    </source>
</evidence>
<proteinExistence type="inferred from homology"/>
<sequence>MDKQNVPVITLDGPSASGKGTIARLVSQALGFHYLDSGALYRLVALAAMKRNTDVSDEHSMVDIARHLNVSFRDSSIWLEGKDVSDEVRAEACGEYASRIAQYSALRVELLGYQRDFRKSPGLVTDGRDMGSVIFPDATLKIYLTASEEERALRRHKQLMEKGINASIADLIQALRARDERDSSRSTSPLQQCEDACLLDTTGLSIDQVVSRVLNMYAEARKA</sequence>
<keyword id="KW-0067">ATP-binding</keyword>
<keyword id="KW-0963">Cytoplasm</keyword>
<keyword id="KW-0418">Kinase</keyword>
<keyword id="KW-0547">Nucleotide-binding</keyword>
<keyword id="KW-1185">Reference proteome</keyword>
<keyword id="KW-0808">Transferase</keyword>
<feature type="chain" id="PRO_0000131946" description="Cytidylate kinase">
    <location>
        <begin position="1"/>
        <end position="223"/>
    </location>
</feature>
<feature type="binding site" evidence="1">
    <location>
        <begin position="13"/>
        <end position="21"/>
    </location>
    <ligand>
        <name>ATP</name>
        <dbReference type="ChEBI" id="CHEBI:30616"/>
    </ligand>
</feature>
<reference key="1">
    <citation type="journal article" date="2003" name="J. Bacteriol.">
        <title>Complete genome sequence of the ammonia-oxidizing bacterium and obligate chemolithoautotroph Nitrosomonas europaea.</title>
        <authorList>
            <person name="Chain P."/>
            <person name="Lamerdin J.E."/>
            <person name="Larimer F.W."/>
            <person name="Regala W."/>
            <person name="Lao V."/>
            <person name="Land M.L."/>
            <person name="Hauser L."/>
            <person name="Hooper A.B."/>
            <person name="Klotz M.G."/>
            <person name="Norton J."/>
            <person name="Sayavedra-Soto L.A."/>
            <person name="Arciero D.M."/>
            <person name="Hommes N.G."/>
            <person name="Whittaker M.M."/>
            <person name="Arp D.J."/>
        </authorList>
    </citation>
    <scope>NUCLEOTIDE SEQUENCE [LARGE SCALE GENOMIC DNA]</scope>
    <source>
        <strain>ATCC 19718 / CIP 103999 / KCTC 2705 / NBRC 14298</strain>
    </source>
</reference>
<gene>
    <name evidence="1" type="primary">cmk</name>
    <name type="ordered locus">NE1963</name>
</gene>
<dbReference type="EC" id="2.7.4.25" evidence="1"/>
<dbReference type="EMBL" id="AL954747">
    <property type="protein sequence ID" value="CAD85874.1"/>
    <property type="molecule type" value="Genomic_DNA"/>
</dbReference>
<dbReference type="RefSeq" id="WP_011112494.1">
    <property type="nucleotide sequence ID" value="NC_004757.1"/>
</dbReference>
<dbReference type="SMR" id="Q82TD5"/>
<dbReference type="STRING" id="228410.NE1963"/>
<dbReference type="GeneID" id="87105116"/>
<dbReference type="KEGG" id="neu:NE1963"/>
<dbReference type="eggNOG" id="COG0283">
    <property type="taxonomic scope" value="Bacteria"/>
</dbReference>
<dbReference type="HOGENOM" id="CLU_079959_2_0_4"/>
<dbReference type="OrthoDB" id="9807434at2"/>
<dbReference type="PhylomeDB" id="Q82TD5"/>
<dbReference type="Proteomes" id="UP000001416">
    <property type="component" value="Chromosome"/>
</dbReference>
<dbReference type="GO" id="GO:0005829">
    <property type="term" value="C:cytosol"/>
    <property type="evidence" value="ECO:0007669"/>
    <property type="project" value="TreeGrafter"/>
</dbReference>
<dbReference type="GO" id="GO:0005524">
    <property type="term" value="F:ATP binding"/>
    <property type="evidence" value="ECO:0007669"/>
    <property type="project" value="UniProtKB-UniRule"/>
</dbReference>
<dbReference type="GO" id="GO:0036430">
    <property type="term" value="F:CMP kinase activity"/>
    <property type="evidence" value="ECO:0007669"/>
    <property type="project" value="RHEA"/>
</dbReference>
<dbReference type="GO" id="GO:0036431">
    <property type="term" value="F:dCMP kinase activity"/>
    <property type="evidence" value="ECO:0007669"/>
    <property type="project" value="RHEA"/>
</dbReference>
<dbReference type="GO" id="GO:0015949">
    <property type="term" value="P:nucleobase-containing small molecule interconversion"/>
    <property type="evidence" value="ECO:0007669"/>
    <property type="project" value="TreeGrafter"/>
</dbReference>
<dbReference type="GO" id="GO:0006220">
    <property type="term" value="P:pyrimidine nucleotide metabolic process"/>
    <property type="evidence" value="ECO:0007669"/>
    <property type="project" value="UniProtKB-UniRule"/>
</dbReference>
<dbReference type="CDD" id="cd02020">
    <property type="entry name" value="CMPK"/>
    <property type="match status" value="1"/>
</dbReference>
<dbReference type="Gene3D" id="3.40.50.300">
    <property type="entry name" value="P-loop containing nucleotide triphosphate hydrolases"/>
    <property type="match status" value="1"/>
</dbReference>
<dbReference type="HAMAP" id="MF_00238">
    <property type="entry name" value="Cytidyl_kinase_type1"/>
    <property type="match status" value="1"/>
</dbReference>
<dbReference type="InterPro" id="IPR003136">
    <property type="entry name" value="Cytidylate_kin"/>
</dbReference>
<dbReference type="InterPro" id="IPR011994">
    <property type="entry name" value="Cytidylate_kinase_dom"/>
</dbReference>
<dbReference type="InterPro" id="IPR027417">
    <property type="entry name" value="P-loop_NTPase"/>
</dbReference>
<dbReference type="NCBIfam" id="TIGR00017">
    <property type="entry name" value="cmk"/>
    <property type="match status" value="1"/>
</dbReference>
<dbReference type="PANTHER" id="PTHR21299:SF2">
    <property type="entry name" value="CYTIDYLATE KINASE"/>
    <property type="match status" value="1"/>
</dbReference>
<dbReference type="PANTHER" id="PTHR21299">
    <property type="entry name" value="CYTIDYLATE KINASE/PANTOATE-BETA-ALANINE LIGASE"/>
    <property type="match status" value="1"/>
</dbReference>
<dbReference type="Pfam" id="PF02224">
    <property type="entry name" value="Cytidylate_kin"/>
    <property type="match status" value="1"/>
</dbReference>
<dbReference type="SUPFAM" id="SSF52540">
    <property type="entry name" value="P-loop containing nucleoside triphosphate hydrolases"/>
    <property type="match status" value="1"/>
</dbReference>
<accession>Q82TD5</accession>
<protein>
    <recommendedName>
        <fullName evidence="1">Cytidylate kinase</fullName>
        <shortName evidence="1">CK</shortName>
        <ecNumber evidence="1">2.7.4.25</ecNumber>
    </recommendedName>
    <alternativeName>
        <fullName evidence="1">Cytidine monophosphate kinase</fullName>
        <shortName evidence="1">CMP kinase</shortName>
    </alternativeName>
</protein>